<dbReference type="EMBL" id="CU329670">
    <property type="protein sequence ID" value="CAB03611.1"/>
    <property type="molecule type" value="Genomic_DNA"/>
</dbReference>
<dbReference type="PIR" id="T39071">
    <property type="entry name" value="T39071"/>
</dbReference>
<dbReference type="RefSeq" id="NP_594118.1">
    <property type="nucleotide sequence ID" value="NM_001019542.2"/>
</dbReference>
<dbReference type="SMR" id="Q92354"/>
<dbReference type="BioGRID" id="278067">
    <property type="interactions" value="29"/>
</dbReference>
<dbReference type="FunCoup" id="Q92354">
    <property type="interactions" value="501"/>
</dbReference>
<dbReference type="STRING" id="284812.Q92354"/>
<dbReference type="iPTMnet" id="Q92354"/>
<dbReference type="PaxDb" id="4896-SPAC6G9.09c.1"/>
<dbReference type="EnsemblFungi" id="SPAC6G9.09c.1">
    <property type="protein sequence ID" value="SPAC6G9.09c.1:pep"/>
    <property type="gene ID" value="SPAC6G9.09c"/>
</dbReference>
<dbReference type="GeneID" id="2541570"/>
<dbReference type="KEGG" id="spo:2541570"/>
<dbReference type="PomBase" id="SPAC6G9.09c">
    <property type="gene designation" value="rpl2401"/>
</dbReference>
<dbReference type="VEuPathDB" id="FungiDB:SPAC6G9.09c"/>
<dbReference type="eggNOG" id="KOG1722">
    <property type="taxonomic scope" value="Eukaryota"/>
</dbReference>
<dbReference type="HOGENOM" id="CLU_106411_0_0_1"/>
<dbReference type="InParanoid" id="Q92354"/>
<dbReference type="OMA" id="PGHGKKM"/>
<dbReference type="PhylomeDB" id="Q92354"/>
<dbReference type="PRO" id="PR:Q92354"/>
<dbReference type="Proteomes" id="UP000002485">
    <property type="component" value="Chromosome I"/>
</dbReference>
<dbReference type="GO" id="GO:0022625">
    <property type="term" value="C:cytosolic large ribosomal subunit"/>
    <property type="evidence" value="ECO:0000318"/>
    <property type="project" value="GO_Central"/>
</dbReference>
<dbReference type="GO" id="GO:0003729">
    <property type="term" value="F:mRNA binding"/>
    <property type="evidence" value="ECO:0000318"/>
    <property type="project" value="GO_Central"/>
</dbReference>
<dbReference type="GO" id="GO:0003735">
    <property type="term" value="F:structural constituent of ribosome"/>
    <property type="evidence" value="ECO:0000318"/>
    <property type="project" value="GO_Central"/>
</dbReference>
<dbReference type="GO" id="GO:0002181">
    <property type="term" value="P:cytoplasmic translation"/>
    <property type="evidence" value="ECO:0000318"/>
    <property type="project" value="GO_Central"/>
</dbReference>
<dbReference type="CDD" id="cd00472">
    <property type="entry name" value="Ribosomal_L24e_L24"/>
    <property type="match status" value="1"/>
</dbReference>
<dbReference type="FunFam" id="2.30.170.20:FF:000002">
    <property type="entry name" value="60S ribosomal protein L24"/>
    <property type="match status" value="1"/>
</dbReference>
<dbReference type="Gene3D" id="6.10.250.1270">
    <property type="match status" value="1"/>
</dbReference>
<dbReference type="Gene3D" id="2.30.170.20">
    <property type="entry name" value="Ribosomal protein L24e"/>
    <property type="match status" value="1"/>
</dbReference>
<dbReference type="InterPro" id="IPR038630">
    <property type="entry name" value="L24e/L24_sf"/>
</dbReference>
<dbReference type="InterPro" id="IPR056366">
    <property type="entry name" value="Ribosomal_eL24"/>
</dbReference>
<dbReference type="InterPro" id="IPR000988">
    <property type="entry name" value="Ribosomal_eL24-rel_N"/>
</dbReference>
<dbReference type="InterPro" id="IPR023442">
    <property type="entry name" value="Ribosomal_eL24_CS"/>
</dbReference>
<dbReference type="PANTHER" id="PTHR10792">
    <property type="entry name" value="60S RIBOSOMAL PROTEIN L24"/>
    <property type="match status" value="1"/>
</dbReference>
<dbReference type="PANTHER" id="PTHR10792:SF1">
    <property type="entry name" value="RIBOSOMAL PROTEIN L24"/>
    <property type="match status" value="1"/>
</dbReference>
<dbReference type="Pfam" id="PF01246">
    <property type="entry name" value="Ribosomal_L24e"/>
    <property type="match status" value="1"/>
</dbReference>
<dbReference type="SUPFAM" id="SSF57716">
    <property type="entry name" value="Glucocorticoid receptor-like (DNA-binding domain)"/>
    <property type="match status" value="1"/>
</dbReference>
<dbReference type="PROSITE" id="PS01073">
    <property type="entry name" value="RIBOSOMAL_L24E"/>
    <property type="match status" value="1"/>
</dbReference>
<gene>
    <name type="primary">rpl2401</name>
    <name type="synonym">rpl24</name>
    <name type="synonym">rpl24a</name>
    <name type="ORF">SPAC6G9.09c</name>
</gene>
<name>RL24A_SCHPO</name>
<keyword id="KW-0963">Cytoplasm</keyword>
<keyword id="KW-1185">Reference proteome</keyword>
<keyword id="KW-0687">Ribonucleoprotein</keyword>
<keyword id="KW-0689">Ribosomal protein</keyword>
<accession>Q92354</accession>
<evidence type="ECO:0000250" key="1">
    <source>
        <dbReference type="UniProtKB" id="P04449"/>
    </source>
</evidence>
<evidence type="ECO:0000256" key="2">
    <source>
        <dbReference type="SAM" id="MobiDB-lite"/>
    </source>
</evidence>
<evidence type="ECO:0000305" key="3"/>
<feature type="chain" id="PRO_0000136891" description="Large ribosomal subunit protein eL24A">
    <location>
        <begin position="1"/>
        <end position="149"/>
    </location>
</feature>
<feature type="region of interest" description="Disordered" evidence="2">
    <location>
        <begin position="93"/>
        <end position="149"/>
    </location>
</feature>
<feature type="compositionally biased region" description="Basic and acidic residues" evidence="2">
    <location>
        <begin position="93"/>
        <end position="102"/>
    </location>
</feature>
<feature type="compositionally biased region" description="Basic and acidic residues" evidence="2">
    <location>
        <begin position="116"/>
        <end position="125"/>
    </location>
</feature>
<organism>
    <name type="scientific">Schizosaccharomyces pombe (strain 972 / ATCC 24843)</name>
    <name type="common">Fission yeast</name>
    <dbReference type="NCBI Taxonomy" id="284812"/>
    <lineage>
        <taxon>Eukaryota</taxon>
        <taxon>Fungi</taxon>
        <taxon>Dikarya</taxon>
        <taxon>Ascomycota</taxon>
        <taxon>Taphrinomycotina</taxon>
        <taxon>Schizosaccharomycetes</taxon>
        <taxon>Schizosaccharomycetales</taxon>
        <taxon>Schizosaccharomycetaceae</taxon>
        <taxon>Schizosaccharomyces</taxon>
    </lineage>
</organism>
<proteinExistence type="inferred from homology"/>
<sequence>MKVEVCSFSGSKVYPGAGRLFVRGDNKVFRFVNKKSESLFLQRKNPRRLSWTVLYRRMHKKGISEEHAKKRTRRTVKHQRGIVGANLDVIKEKRNQRPEVRAAARAAALKQRKDKKAASESEKKAIKAKSAASSARGQAIKNAKAAARH</sequence>
<comment type="function">
    <text evidence="1">Component of the ribosome, a large ribonucleoprotein complex responsible for the synthesis of proteins in the cell. The small ribosomal subunit (SSU) binds messenger RNAs (mRNAs) and translates the encoded message by selecting cognate aminoacyl-transfer RNA (tRNA) molecules. The large subunit (LSU) contains the ribosomal catalytic site termed the peptidyl transferase center (PTC), which catalyzes the formation of peptide bonds, thereby polymerizing the amino acids delivered by tRNAs into a polypeptide chain. The nascent polypeptides leave the ribosome through a tunnel in the LSU and interact with protein factors that function in enzymatic processing, targeting, and the membrane insertion of nascent chains at the exit of the ribosomal tunnel.</text>
</comment>
<comment type="subunit">
    <text evidence="1">Component of the large ribosomal subunit (LSU). Mature yeast ribosomes consist of a small (40S) and a large (60S) subunit. The 40S small subunit contains 1 molecule of ribosomal RNA (18S rRNA) and at least 33 different proteins. The large 60S subunit contains 3 rRNA molecules (25S, 5.8S and 5S rRNA) and at least 46 different proteins.</text>
</comment>
<comment type="subcellular location">
    <subcellularLocation>
        <location evidence="1">Cytoplasm</location>
    </subcellularLocation>
</comment>
<comment type="miscellaneous">
    <text>There are 2 genes for eL24 in S.pombe.</text>
</comment>
<comment type="similarity">
    <text evidence="3">Belongs to the eukaryotic ribosomal protein eL24 family.</text>
</comment>
<reference key="1">
    <citation type="journal article" date="2002" name="Nature">
        <title>The genome sequence of Schizosaccharomyces pombe.</title>
        <authorList>
            <person name="Wood V."/>
            <person name="Gwilliam R."/>
            <person name="Rajandream M.A."/>
            <person name="Lyne M.H."/>
            <person name="Lyne R."/>
            <person name="Stewart A."/>
            <person name="Sgouros J.G."/>
            <person name="Peat N."/>
            <person name="Hayles J."/>
            <person name="Baker S.G."/>
            <person name="Basham D."/>
            <person name="Bowman S."/>
            <person name="Brooks K."/>
            <person name="Brown D."/>
            <person name="Brown S."/>
            <person name="Chillingworth T."/>
            <person name="Churcher C.M."/>
            <person name="Collins M."/>
            <person name="Connor R."/>
            <person name="Cronin A."/>
            <person name="Davis P."/>
            <person name="Feltwell T."/>
            <person name="Fraser A."/>
            <person name="Gentles S."/>
            <person name="Goble A."/>
            <person name="Hamlin N."/>
            <person name="Harris D.E."/>
            <person name="Hidalgo J."/>
            <person name="Hodgson G."/>
            <person name="Holroyd S."/>
            <person name="Hornsby T."/>
            <person name="Howarth S."/>
            <person name="Huckle E.J."/>
            <person name="Hunt S."/>
            <person name="Jagels K."/>
            <person name="James K.D."/>
            <person name="Jones L."/>
            <person name="Jones M."/>
            <person name="Leather S."/>
            <person name="McDonald S."/>
            <person name="McLean J."/>
            <person name="Mooney P."/>
            <person name="Moule S."/>
            <person name="Mungall K.L."/>
            <person name="Murphy L.D."/>
            <person name="Niblett D."/>
            <person name="Odell C."/>
            <person name="Oliver K."/>
            <person name="O'Neil S."/>
            <person name="Pearson D."/>
            <person name="Quail M.A."/>
            <person name="Rabbinowitsch E."/>
            <person name="Rutherford K.M."/>
            <person name="Rutter S."/>
            <person name="Saunders D."/>
            <person name="Seeger K."/>
            <person name="Sharp S."/>
            <person name="Skelton J."/>
            <person name="Simmonds M.N."/>
            <person name="Squares R."/>
            <person name="Squares S."/>
            <person name="Stevens K."/>
            <person name="Taylor K."/>
            <person name="Taylor R.G."/>
            <person name="Tivey A."/>
            <person name="Walsh S.V."/>
            <person name="Warren T."/>
            <person name="Whitehead S."/>
            <person name="Woodward J.R."/>
            <person name="Volckaert G."/>
            <person name="Aert R."/>
            <person name="Robben J."/>
            <person name="Grymonprez B."/>
            <person name="Weltjens I."/>
            <person name="Vanstreels E."/>
            <person name="Rieger M."/>
            <person name="Schaefer M."/>
            <person name="Mueller-Auer S."/>
            <person name="Gabel C."/>
            <person name="Fuchs M."/>
            <person name="Duesterhoeft A."/>
            <person name="Fritzc C."/>
            <person name="Holzer E."/>
            <person name="Moestl D."/>
            <person name="Hilbert H."/>
            <person name="Borzym K."/>
            <person name="Langer I."/>
            <person name="Beck A."/>
            <person name="Lehrach H."/>
            <person name="Reinhardt R."/>
            <person name="Pohl T.M."/>
            <person name="Eger P."/>
            <person name="Zimmermann W."/>
            <person name="Wedler H."/>
            <person name="Wambutt R."/>
            <person name="Purnelle B."/>
            <person name="Goffeau A."/>
            <person name="Cadieu E."/>
            <person name="Dreano S."/>
            <person name="Gloux S."/>
            <person name="Lelaure V."/>
            <person name="Mottier S."/>
            <person name="Galibert F."/>
            <person name="Aves S.J."/>
            <person name="Xiang Z."/>
            <person name="Hunt C."/>
            <person name="Moore K."/>
            <person name="Hurst S.M."/>
            <person name="Lucas M."/>
            <person name="Rochet M."/>
            <person name="Gaillardin C."/>
            <person name="Tallada V.A."/>
            <person name="Garzon A."/>
            <person name="Thode G."/>
            <person name="Daga R.R."/>
            <person name="Cruzado L."/>
            <person name="Jimenez J."/>
            <person name="Sanchez M."/>
            <person name="del Rey F."/>
            <person name="Benito J."/>
            <person name="Dominguez A."/>
            <person name="Revuelta J.L."/>
            <person name="Moreno S."/>
            <person name="Armstrong J."/>
            <person name="Forsburg S.L."/>
            <person name="Cerutti L."/>
            <person name="Lowe T."/>
            <person name="McCombie W.R."/>
            <person name="Paulsen I."/>
            <person name="Potashkin J."/>
            <person name="Shpakovski G.V."/>
            <person name="Ussery D."/>
            <person name="Barrell B.G."/>
            <person name="Nurse P."/>
        </authorList>
    </citation>
    <scope>NUCLEOTIDE SEQUENCE [LARGE SCALE GENOMIC DNA]</scope>
    <source>
        <strain>972 / ATCC 24843</strain>
    </source>
</reference>
<protein>
    <recommendedName>
        <fullName evidence="3">Large ribosomal subunit protein eL24A</fullName>
    </recommendedName>
    <alternativeName>
        <fullName>60S ribosomal protein L24-A</fullName>
    </alternativeName>
</protein>